<sequence length="533" mass="56824">MDYVPWIGNGYRYGKNHRGVDDITAPKTGAGSSSGTSTNTSGSRSFLPTFSNVGVGLKANVQATLGGSQTTTTGGSKWPTLDQANLLLWTGSGWRNDKNGQSDENHTTFKSATGSGQQGGSSGTSAGNPDSLKQDKISKSGDSLSVVDTGQGDDTHYANLPPSITPTSDWPNALSFTNKNNAQRVQLFLRGLLDSIPVLVNKSGQDDNSKFKAEHQKWKYSDFKSDQTKLNLPAYGEVNGLLNPALVETYFGTTRAGGSGNQNRTTVPGIGFKIPEQNNDSKAVLITPGLAWTPQDVGNLVVSGTTVSFQLGGWLVTFTDFVKPRSGYLGLQLTGLDVSEATQRELIWAPRPWAAFRGSWVNRLGRVESVWDFKGVWADQAHSAVSESQAATSGTTTATGAALPEHPNALAFQVSVVEASAYKPNTSSGQTQSTNSSPYLHLIQPKKVTQSDKLDDDLKNLLDPNEVRARMLQSFGTENSTQAQPQSLKTTTPVFGAMSGTSAVCLVVGVPRRAQAQVNLAWISPPLNGWVGH</sequence>
<proteinExistence type="uncertain"/>
<accession>P75375</accession>
<reference key="1">
    <citation type="journal article" date="1996" name="Nucleic Acids Res.">
        <title>Complete sequence analysis of the genome of the bacterium Mycoplasma pneumoniae.</title>
        <authorList>
            <person name="Himmelreich R."/>
            <person name="Hilbert H."/>
            <person name="Plagens H."/>
            <person name="Pirkl E."/>
            <person name="Li B.-C."/>
            <person name="Herrmann R."/>
        </authorList>
    </citation>
    <scope>NUCLEOTIDE SEQUENCE [LARGE SCALE GENOMIC DNA]</scope>
    <source>
        <strain>ATCC 29342 / M129 / Subtype 1</strain>
    </source>
</reference>
<name>Y409_MYCPN</name>
<keyword id="KW-1185">Reference proteome</keyword>
<dbReference type="EMBL" id="U00089">
    <property type="protein sequence ID" value="AAB96077.1"/>
    <property type="molecule type" value="Genomic_DNA"/>
</dbReference>
<dbReference type="PIR" id="S73755">
    <property type="entry name" value="S73755"/>
</dbReference>
<dbReference type="RefSeq" id="NP_110097.1">
    <property type="nucleotide sequence ID" value="NC_000912.1"/>
</dbReference>
<dbReference type="SMR" id="P75375"/>
<dbReference type="STRING" id="272634.MPN_409"/>
<dbReference type="EnsemblBacteria" id="AAB96077">
    <property type="protein sequence ID" value="AAB96077"/>
    <property type="gene ID" value="MPN_409"/>
</dbReference>
<dbReference type="KEGG" id="mpn:MPN_409"/>
<dbReference type="PATRIC" id="fig|272634.6.peg.443"/>
<dbReference type="HOGENOM" id="CLU_022417_1_0_14"/>
<dbReference type="OrthoDB" id="403686at2"/>
<dbReference type="BioCyc" id="MPNE272634:G1GJ3-661-MONOMER"/>
<dbReference type="Proteomes" id="UP000000808">
    <property type="component" value="Chromosome"/>
</dbReference>
<dbReference type="InterPro" id="IPR004940">
    <property type="entry name" value="Adhesin_P1_C"/>
</dbReference>
<dbReference type="Pfam" id="PF03257">
    <property type="entry name" value="Adhesin_P1_C"/>
    <property type="match status" value="1"/>
</dbReference>
<feature type="chain" id="PRO_0000210714" description="Putative adhesin P1-like protein MPN_409">
    <location>
        <begin position="1"/>
        <end position="533"/>
    </location>
</feature>
<feature type="region of interest" description="Disordered" evidence="1">
    <location>
        <begin position="15"/>
        <end position="45"/>
    </location>
</feature>
<feature type="region of interest" description="Disordered" evidence="1">
    <location>
        <begin position="92"/>
        <end position="166"/>
    </location>
</feature>
<feature type="compositionally biased region" description="Low complexity" evidence="1">
    <location>
        <begin position="28"/>
        <end position="45"/>
    </location>
</feature>
<feature type="compositionally biased region" description="Basic and acidic residues" evidence="1">
    <location>
        <begin position="95"/>
        <end position="107"/>
    </location>
</feature>
<organism>
    <name type="scientific">Mycoplasma pneumoniae (strain ATCC 29342 / M129 / Subtype 1)</name>
    <name type="common">Mycoplasmoides pneumoniae</name>
    <dbReference type="NCBI Taxonomy" id="272634"/>
    <lineage>
        <taxon>Bacteria</taxon>
        <taxon>Bacillati</taxon>
        <taxon>Mycoplasmatota</taxon>
        <taxon>Mycoplasmoidales</taxon>
        <taxon>Mycoplasmoidaceae</taxon>
        <taxon>Mycoplasmoides</taxon>
    </lineage>
</organism>
<evidence type="ECO:0000256" key="1">
    <source>
        <dbReference type="SAM" id="MobiDB-lite"/>
    </source>
</evidence>
<evidence type="ECO:0000305" key="2"/>
<gene>
    <name type="ordered locus">MPN_409</name>
    <name type="ORF">F11_orf533L</name>
    <name type="ORF">MP429</name>
</gene>
<protein>
    <recommendedName>
        <fullName>Putative adhesin P1-like protein MPN_409</fullName>
    </recommendedName>
</protein>
<comment type="similarity">
    <text evidence="2">Belongs to the adhesin P1 family.</text>
</comment>
<comment type="caution">
    <text evidence="2">Could be the product of a pseudogene.</text>
</comment>